<proteinExistence type="inferred from homology"/>
<keyword id="KW-1185">Reference proteome</keyword>
<name>HYBE_ECOL6</name>
<comment type="similarity">
    <text evidence="1">Belongs to the HupJ family.</text>
</comment>
<organism>
    <name type="scientific">Escherichia coli O6:H1 (strain CFT073 / ATCC 700928 / UPEC)</name>
    <dbReference type="NCBI Taxonomy" id="199310"/>
    <lineage>
        <taxon>Bacteria</taxon>
        <taxon>Pseudomonadati</taxon>
        <taxon>Pseudomonadota</taxon>
        <taxon>Gammaproteobacteria</taxon>
        <taxon>Enterobacterales</taxon>
        <taxon>Enterobacteriaceae</taxon>
        <taxon>Escherichia</taxon>
    </lineage>
</organism>
<feature type="chain" id="PRO_0000201427" description="Hydrogenase-2 operon protein HybE">
    <location>
        <begin position="1"/>
        <end position="162"/>
    </location>
</feature>
<evidence type="ECO:0000305" key="1"/>
<protein>
    <recommendedName>
        <fullName>Hydrogenase-2 operon protein HybE</fullName>
    </recommendedName>
</protein>
<reference key="1">
    <citation type="journal article" date="2002" name="Proc. Natl. Acad. Sci. U.S.A.">
        <title>Extensive mosaic structure revealed by the complete genome sequence of uropathogenic Escherichia coli.</title>
        <authorList>
            <person name="Welch R.A."/>
            <person name="Burland V."/>
            <person name="Plunkett G. III"/>
            <person name="Redford P."/>
            <person name="Roesch P."/>
            <person name="Rasko D."/>
            <person name="Buckles E.L."/>
            <person name="Liou S.-R."/>
            <person name="Boutin A."/>
            <person name="Hackett J."/>
            <person name="Stroud D."/>
            <person name="Mayhew G.F."/>
            <person name="Rose D.J."/>
            <person name="Zhou S."/>
            <person name="Schwartz D.C."/>
            <person name="Perna N.T."/>
            <person name="Mobley H.L.T."/>
            <person name="Donnenberg M.S."/>
            <person name="Blattner F.R."/>
        </authorList>
    </citation>
    <scope>NUCLEOTIDE SEQUENCE [LARGE SCALE GENOMIC DNA]</scope>
    <source>
        <strain>CFT073 / ATCC 700928 / UPEC</strain>
    </source>
</reference>
<accession>P0AAN2</accession>
<accession>P37183</accession>
<dbReference type="EMBL" id="AE014075">
    <property type="protein sequence ID" value="AAN82173.1"/>
    <property type="molecule type" value="Genomic_DNA"/>
</dbReference>
<dbReference type="RefSeq" id="WP_000134014.1">
    <property type="nucleotide sequence ID" value="NZ_CP051263.1"/>
</dbReference>
<dbReference type="BMRB" id="P0AAN2"/>
<dbReference type="SMR" id="P0AAN2"/>
<dbReference type="STRING" id="199310.c3729"/>
<dbReference type="GeneID" id="93778993"/>
<dbReference type="KEGG" id="ecc:c3729"/>
<dbReference type="eggNOG" id="COG1773">
    <property type="taxonomic scope" value="Bacteria"/>
</dbReference>
<dbReference type="HOGENOM" id="CLU_091699_2_0_6"/>
<dbReference type="BioCyc" id="ECOL199310:C3729-MONOMER"/>
<dbReference type="Proteomes" id="UP000001410">
    <property type="component" value="Chromosome"/>
</dbReference>
<dbReference type="FunFam" id="3.30.1460.40:FF:000001">
    <property type="entry name" value="Hydrogenase-2 operon protein hybE"/>
    <property type="match status" value="1"/>
</dbReference>
<dbReference type="Gene3D" id="3.30.1460.40">
    <property type="entry name" value="[NiFe]-hydrogenase assembly chaperone, HybE"/>
    <property type="match status" value="1"/>
</dbReference>
<dbReference type="InterPro" id="IPR023994">
    <property type="entry name" value="NiFe-hyd_HybE"/>
</dbReference>
<dbReference type="InterPro" id="IPR038530">
    <property type="entry name" value="NiFe-hyd_HybE_sf"/>
</dbReference>
<dbReference type="NCBIfam" id="TIGR03993">
    <property type="entry name" value="hydrog_HybE"/>
    <property type="match status" value="1"/>
</dbReference>
<dbReference type="NCBIfam" id="NF007776">
    <property type="entry name" value="PRK10465.1"/>
    <property type="match status" value="1"/>
</dbReference>
<dbReference type="Pfam" id="PF11939">
    <property type="entry name" value="NiFe-hyd_HybE"/>
    <property type="match status" value="1"/>
</dbReference>
<sequence>MTEEIAGFQTSPKAQVQAAFEEIARRSMHDLSFLHPSMPVYVSDFTLFEGQWTGCVITPWMLSAVIFPGPDQLWPLRKVSEKIGLQLPYGTMTFTVGELDGVSQYLSCSLMSPLSHSMSIEEGQRLTDDCARMILSLPVTNPDVPHAGRRALLFGRRSGENA</sequence>
<gene>
    <name type="primary">hybE</name>
    <name type="ordered locus">c3729</name>
</gene>